<proteinExistence type="evidence at transcript level"/>
<feature type="chain" id="PRO_0000343567" description="Uncharacterized protein C2orf74 homolog">
    <location>
        <begin position="1"/>
        <end position="196"/>
    </location>
</feature>
<feature type="transmembrane region" description="Helical" evidence="1">
    <location>
        <begin position="26"/>
        <end position="46"/>
    </location>
</feature>
<feature type="sequence conflict" description="In Ref. 1; BAB24840." evidence="2" ref="1">
    <original>A</original>
    <variation>D</variation>
    <location>
        <position position="71"/>
    </location>
</feature>
<feature type="sequence conflict" description="In Ref. 1; BAB24840." evidence="2" ref="1">
    <original>N</original>
    <variation>H</variation>
    <location>
        <position position="138"/>
    </location>
</feature>
<feature type="sequence conflict" description="In Ref. 1; BAB24840." evidence="2" ref="1">
    <original>E</original>
    <variation>K</variation>
    <location>
        <position position="172"/>
    </location>
</feature>
<feature type="sequence conflict" description="In Ref. 1; BAB24840." evidence="2" ref="1">
    <original>G</original>
    <variation>V</variation>
    <location>
        <position position="179"/>
    </location>
</feature>
<feature type="sequence conflict" description="In Ref. 1; BAB24840." evidence="2" ref="1">
    <original>R</original>
    <variation>L</variation>
    <location>
        <position position="186"/>
    </location>
</feature>
<name>CB074_MOUSE</name>
<dbReference type="EMBL" id="AK007052">
    <property type="protein sequence ID" value="BAB24840.1"/>
    <property type="status" value="ALT_SEQ"/>
    <property type="molecule type" value="mRNA"/>
</dbReference>
<dbReference type="EMBL" id="AK007139">
    <property type="protein sequence ID" value="BAB24869.1"/>
    <property type="status" value="ALT_INIT"/>
    <property type="molecule type" value="mRNA"/>
</dbReference>
<dbReference type="EMBL" id="AL672049">
    <property type="status" value="NOT_ANNOTATED_CDS"/>
    <property type="molecule type" value="Genomic_DNA"/>
</dbReference>
<dbReference type="EMBL" id="BC049567">
    <property type="protein sequence ID" value="AAH49567.1"/>
    <property type="molecule type" value="mRNA"/>
</dbReference>
<dbReference type="RefSeq" id="NP_001103603.1">
    <property type="nucleotide sequence ID" value="NM_001110133.1"/>
</dbReference>
<dbReference type="RefSeq" id="NP_080381.2">
    <property type="nucleotide sequence ID" value="NM_026105.3"/>
</dbReference>
<dbReference type="RefSeq" id="XP_006514852.1">
    <property type="nucleotide sequence ID" value="XM_006514789.3"/>
</dbReference>
<dbReference type="RefSeq" id="XP_006514853.1">
    <property type="nucleotide sequence ID" value="XM_006514790.4"/>
</dbReference>
<dbReference type="SMR" id="Q810S2"/>
<dbReference type="FunCoup" id="Q810S2">
    <property type="interactions" value="1"/>
</dbReference>
<dbReference type="STRING" id="10090.ENSMUSP00000131204"/>
<dbReference type="PhosphoSitePlus" id="Q810S2"/>
<dbReference type="SwissPalm" id="Q810S2"/>
<dbReference type="PaxDb" id="10090-ENSMUSP00000020527"/>
<dbReference type="Antibodypedia" id="48106">
    <property type="antibodies" value="18 antibodies from 12 providers"/>
</dbReference>
<dbReference type="DNASU" id="67358"/>
<dbReference type="Ensembl" id="ENSMUST00000169264.8">
    <property type="protein sequence ID" value="ENSMUSP00000131204.2"/>
    <property type="gene ID" value="ENSMUSG00000020286.14"/>
</dbReference>
<dbReference type="Ensembl" id="ENSMUST00000239488.2">
    <property type="protein sequence ID" value="ENSMUSP00000159376.2"/>
    <property type="gene ID" value="ENSMUSG00000020286.14"/>
</dbReference>
<dbReference type="GeneID" id="67358"/>
<dbReference type="KEGG" id="mmu:67358"/>
<dbReference type="UCSC" id="uc007ife.1">
    <property type="organism name" value="mouse"/>
</dbReference>
<dbReference type="AGR" id="MGI:1914608"/>
<dbReference type="MGI" id="MGI:1914608">
    <property type="gene designation" value="1700093K21Rik"/>
</dbReference>
<dbReference type="VEuPathDB" id="HostDB:ENSMUSG00000020286"/>
<dbReference type="eggNOG" id="ENOG502TF2B">
    <property type="taxonomic scope" value="Eukaryota"/>
</dbReference>
<dbReference type="GeneTree" id="ENSGT00390000004911"/>
<dbReference type="HOGENOM" id="CLU_1351712_0_0_1"/>
<dbReference type="InParanoid" id="Q810S2"/>
<dbReference type="OMA" id="TEKGPCT"/>
<dbReference type="OrthoDB" id="9836846at2759"/>
<dbReference type="PhylomeDB" id="Q810S2"/>
<dbReference type="BioGRID-ORCS" id="67358">
    <property type="hits" value="2 hits in 76 CRISPR screens"/>
</dbReference>
<dbReference type="PRO" id="PR:Q810S2"/>
<dbReference type="Proteomes" id="UP000000589">
    <property type="component" value="Chromosome 11"/>
</dbReference>
<dbReference type="RNAct" id="Q810S2">
    <property type="molecule type" value="protein"/>
</dbReference>
<dbReference type="Bgee" id="ENSMUSG00000020286">
    <property type="expression patterns" value="Expressed in seminiferous tubule of testis and 21 other cell types or tissues"/>
</dbReference>
<dbReference type="ExpressionAtlas" id="Q810S2">
    <property type="expression patterns" value="baseline and differential"/>
</dbReference>
<dbReference type="GO" id="GO:0016020">
    <property type="term" value="C:membrane"/>
    <property type="evidence" value="ECO:0007669"/>
    <property type="project" value="UniProtKB-SubCell"/>
</dbReference>
<dbReference type="InterPro" id="IPR027813">
    <property type="entry name" value="DUF4642"/>
</dbReference>
<dbReference type="PANTHER" id="PTHR37882">
    <property type="entry name" value="HYPOTHETICAL PROTEIN LOC690352"/>
    <property type="match status" value="1"/>
</dbReference>
<dbReference type="Pfam" id="PF15484">
    <property type="entry name" value="DUF4642"/>
    <property type="match status" value="1"/>
</dbReference>
<evidence type="ECO:0000255" key="1"/>
<evidence type="ECO:0000305" key="2"/>
<organism>
    <name type="scientific">Mus musculus</name>
    <name type="common">Mouse</name>
    <dbReference type="NCBI Taxonomy" id="10090"/>
    <lineage>
        <taxon>Eukaryota</taxon>
        <taxon>Metazoa</taxon>
        <taxon>Chordata</taxon>
        <taxon>Craniata</taxon>
        <taxon>Vertebrata</taxon>
        <taxon>Euteleostomi</taxon>
        <taxon>Mammalia</taxon>
        <taxon>Eutheria</taxon>
        <taxon>Euarchontoglires</taxon>
        <taxon>Glires</taxon>
        <taxon>Rodentia</taxon>
        <taxon>Myomorpha</taxon>
        <taxon>Muroidea</taxon>
        <taxon>Muridae</taxon>
        <taxon>Murinae</taxon>
        <taxon>Mus</taxon>
        <taxon>Mus</taxon>
    </lineage>
</organism>
<keyword id="KW-0472">Membrane</keyword>
<keyword id="KW-1185">Reference proteome</keyword>
<keyword id="KW-0812">Transmembrane</keyword>
<keyword id="KW-1133">Transmembrane helix</keyword>
<sequence length="196" mass="22381">MFTQSDTGKIEEIFTTNTMAFETTAITFFFILLICFICILLLLAIFLYKCYRGHNHEEPLKTLCTGEGCVAANAEMDKPEDQDKVLMHFLNMGLPMKPSILVQKQSKEEMATSLGDNIKAEDYQKKQTYEPVNARETNHEGELAEKMPIHVHRSSDTGSQKRPLKGVTFSKEVIVVDLGNEYPTPRSYAREHKERK</sequence>
<protein>
    <recommendedName>
        <fullName>Uncharacterized protein C2orf74 homolog</fullName>
    </recommendedName>
</protein>
<reference key="1">
    <citation type="journal article" date="2005" name="Science">
        <title>The transcriptional landscape of the mammalian genome.</title>
        <authorList>
            <person name="Carninci P."/>
            <person name="Kasukawa T."/>
            <person name="Katayama S."/>
            <person name="Gough J."/>
            <person name="Frith M.C."/>
            <person name="Maeda N."/>
            <person name="Oyama R."/>
            <person name="Ravasi T."/>
            <person name="Lenhard B."/>
            <person name="Wells C."/>
            <person name="Kodzius R."/>
            <person name="Shimokawa K."/>
            <person name="Bajic V.B."/>
            <person name="Brenner S.E."/>
            <person name="Batalov S."/>
            <person name="Forrest A.R."/>
            <person name="Zavolan M."/>
            <person name="Davis M.J."/>
            <person name="Wilming L.G."/>
            <person name="Aidinis V."/>
            <person name="Allen J.E."/>
            <person name="Ambesi-Impiombato A."/>
            <person name="Apweiler R."/>
            <person name="Aturaliya R.N."/>
            <person name="Bailey T.L."/>
            <person name="Bansal M."/>
            <person name="Baxter L."/>
            <person name="Beisel K.W."/>
            <person name="Bersano T."/>
            <person name="Bono H."/>
            <person name="Chalk A.M."/>
            <person name="Chiu K.P."/>
            <person name="Choudhary V."/>
            <person name="Christoffels A."/>
            <person name="Clutterbuck D.R."/>
            <person name="Crowe M.L."/>
            <person name="Dalla E."/>
            <person name="Dalrymple B.P."/>
            <person name="de Bono B."/>
            <person name="Della Gatta G."/>
            <person name="di Bernardo D."/>
            <person name="Down T."/>
            <person name="Engstrom P."/>
            <person name="Fagiolini M."/>
            <person name="Faulkner G."/>
            <person name="Fletcher C.F."/>
            <person name="Fukushima T."/>
            <person name="Furuno M."/>
            <person name="Futaki S."/>
            <person name="Gariboldi M."/>
            <person name="Georgii-Hemming P."/>
            <person name="Gingeras T.R."/>
            <person name="Gojobori T."/>
            <person name="Green R.E."/>
            <person name="Gustincich S."/>
            <person name="Harbers M."/>
            <person name="Hayashi Y."/>
            <person name="Hensch T.K."/>
            <person name="Hirokawa N."/>
            <person name="Hill D."/>
            <person name="Huminiecki L."/>
            <person name="Iacono M."/>
            <person name="Ikeo K."/>
            <person name="Iwama A."/>
            <person name="Ishikawa T."/>
            <person name="Jakt M."/>
            <person name="Kanapin A."/>
            <person name="Katoh M."/>
            <person name="Kawasawa Y."/>
            <person name="Kelso J."/>
            <person name="Kitamura H."/>
            <person name="Kitano H."/>
            <person name="Kollias G."/>
            <person name="Krishnan S.P."/>
            <person name="Kruger A."/>
            <person name="Kummerfeld S.K."/>
            <person name="Kurochkin I.V."/>
            <person name="Lareau L.F."/>
            <person name="Lazarevic D."/>
            <person name="Lipovich L."/>
            <person name="Liu J."/>
            <person name="Liuni S."/>
            <person name="McWilliam S."/>
            <person name="Madan Babu M."/>
            <person name="Madera M."/>
            <person name="Marchionni L."/>
            <person name="Matsuda H."/>
            <person name="Matsuzawa S."/>
            <person name="Miki H."/>
            <person name="Mignone F."/>
            <person name="Miyake S."/>
            <person name="Morris K."/>
            <person name="Mottagui-Tabar S."/>
            <person name="Mulder N."/>
            <person name="Nakano N."/>
            <person name="Nakauchi H."/>
            <person name="Ng P."/>
            <person name="Nilsson R."/>
            <person name="Nishiguchi S."/>
            <person name="Nishikawa S."/>
            <person name="Nori F."/>
            <person name="Ohara O."/>
            <person name="Okazaki Y."/>
            <person name="Orlando V."/>
            <person name="Pang K.C."/>
            <person name="Pavan W.J."/>
            <person name="Pavesi G."/>
            <person name="Pesole G."/>
            <person name="Petrovsky N."/>
            <person name="Piazza S."/>
            <person name="Reed J."/>
            <person name="Reid J.F."/>
            <person name="Ring B.Z."/>
            <person name="Ringwald M."/>
            <person name="Rost B."/>
            <person name="Ruan Y."/>
            <person name="Salzberg S.L."/>
            <person name="Sandelin A."/>
            <person name="Schneider C."/>
            <person name="Schoenbach C."/>
            <person name="Sekiguchi K."/>
            <person name="Semple C.A."/>
            <person name="Seno S."/>
            <person name="Sessa L."/>
            <person name="Sheng Y."/>
            <person name="Shibata Y."/>
            <person name="Shimada H."/>
            <person name="Shimada K."/>
            <person name="Silva D."/>
            <person name="Sinclair B."/>
            <person name="Sperling S."/>
            <person name="Stupka E."/>
            <person name="Sugiura K."/>
            <person name="Sultana R."/>
            <person name="Takenaka Y."/>
            <person name="Taki K."/>
            <person name="Tammoja K."/>
            <person name="Tan S.L."/>
            <person name="Tang S."/>
            <person name="Taylor M.S."/>
            <person name="Tegner J."/>
            <person name="Teichmann S.A."/>
            <person name="Ueda H.R."/>
            <person name="van Nimwegen E."/>
            <person name="Verardo R."/>
            <person name="Wei C.L."/>
            <person name="Yagi K."/>
            <person name="Yamanishi H."/>
            <person name="Zabarovsky E."/>
            <person name="Zhu S."/>
            <person name="Zimmer A."/>
            <person name="Hide W."/>
            <person name="Bult C."/>
            <person name="Grimmond S.M."/>
            <person name="Teasdale R.D."/>
            <person name="Liu E.T."/>
            <person name="Brusic V."/>
            <person name="Quackenbush J."/>
            <person name="Wahlestedt C."/>
            <person name="Mattick J.S."/>
            <person name="Hume D.A."/>
            <person name="Kai C."/>
            <person name="Sasaki D."/>
            <person name="Tomaru Y."/>
            <person name="Fukuda S."/>
            <person name="Kanamori-Katayama M."/>
            <person name="Suzuki M."/>
            <person name="Aoki J."/>
            <person name="Arakawa T."/>
            <person name="Iida J."/>
            <person name="Imamura K."/>
            <person name="Itoh M."/>
            <person name="Kato T."/>
            <person name="Kawaji H."/>
            <person name="Kawagashira N."/>
            <person name="Kawashima T."/>
            <person name="Kojima M."/>
            <person name="Kondo S."/>
            <person name="Konno H."/>
            <person name="Nakano K."/>
            <person name="Ninomiya N."/>
            <person name="Nishio T."/>
            <person name="Okada M."/>
            <person name="Plessy C."/>
            <person name="Shibata K."/>
            <person name="Shiraki T."/>
            <person name="Suzuki S."/>
            <person name="Tagami M."/>
            <person name="Waki K."/>
            <person name="Watahiki A."/>
            <person name="Okamura-Oho Y."/>
            <person name="Suzuki H."/>
            <person name="Kawai J."/>
            <person name="Hayashizaki Y."/>
        </authorList>
    </citation>
    <scope>NUCLEOTIDE SEQUENCE [LARGE SCALE MRNA]</scope>
    <source>
        <strain>C57BL/6J</strain>
        <tissue>Testis</tissue>
    </source>
</reference>
<reference key="2">
    <citation type="journal article" date="2009" name="PLoS Biol.">
        <title>Lineage-specific biology revealed by a finished genome assembly of the mouse.</title>
        <authorList>
            <person name="Church D.M."/>
            <person name="Goodstadt L."/>
            <person name="Hillier L.W."/>
            <person name="Zody M.C."/>
            <person name="Goldstein S."/>
            <person name="She X."/>
            <person name="Bult C.J."/>
            <person name="Agarwala R."/>
            <person name="Cherry J.L."/>
            <person name="DiCuccio M."/>
            <person name="Hlavina W."/>
            <person name="Kapustin Y."/>
            <person name="Meric P."/>
            <person name="Maglott D."/>
            <person name="Birtle Z."/>
            <person name="Marques A.C."/>
            <person name="Graves T."/>
            <person name="Zhou S."/>
            <person name="Teague B."/>
            <person name="Potamousis K."/>
            <person name="Churas C."/>
            <person name="Place M."/>
            <person name="Herschleb J."/>
            <person name="Runnheim R."/>
            <person name="Forrest D."/>
            <person name="Amos-Landgraf J."/>
            <person name="Schwartz D.C."/>
            <person name="Cheng Z."/>
            <person name="Lindblad-Toh K."/>
            <person name="Eichler E.E."/>
            <person name="Ponting C.P."/>
        </authorList>
    </citation>
    <scope>NUCLEOTIDE SEQUENCE [LARGE SCALE GENOMIC DNA]</scope>
    <source>
        <strain>C57BL/6J</strain>
    </source>
</reference>
<reference key="3">
    <citation type="journal article" date="2004" name="Genome Res.">
        <title>The status, quality, and expansion of the NIH full-length cDNA project: the Mammalian Gene Collection (MGC).</title>
        <authorList>
            <consortium name="The MGC Project Team"/>
        </authorList>
    </citation>
    <scope>NUCLEOTIDE SEQUENCE [LARGE SCALE MRNA]</scope>
    <source>
        <tissue>Testis</tissue>
    </source>
</reference>
<accession>Q810S2</accession>
<accession>Q9D9C4</accession>
<accession>Q9D9E2</accession>
<comment type="subcellular location">
    <subcellularLocation>
        <location evidence="2">Membrane</location>
        <topology evidence="2">Single-pass membrane protein</topology>
    </subcellularLocation>
</comment>
<comment type="sequence caution" evidence="2">
    <conflict type="erroneous termination">
        <sequence resource="EMBL-CDS" id="BAB24840"/>
    </conflict>
    <text>Truncated C-terminus.</text>
</comment>
<comment type="sequence caution" evidence="2">
    <conflict type="erroneous initiation">
        <sequence resource="EMBL-CDS" id="BAB24869"/>
    </conflict>
</comment>